<evidence type="ECO:0000250" key="1"/>
<evidence type="ECO:0000250" key="2">
    <source>
        <dbReference type="UniProtKB" id="P00157"/>
    </source>
</evidence>
<evidence type="ECO:0000255" key="3">
    <source>
        <dbReference type="PROSITE-ProRule" id="PRU00967"/>
    </source>
</evidence>
<evidence type="ECO:0000255" key="4">
    <source>
        <dbReference type="PROSITE-ProRule" id="PRU00968"/>
    </source>
</evidence>
<name>CYB_PENFU</name>
<protein>
    <recommendedName>
        <fullName>Cytochrome b</fullName>
    </recommendedName>
    <alternativeName>
        <fullName>Complex III subunit 3</fullName>
    </alternativeName>
    <alternativeName>
        <fullName>Complex III subunit III</fullName>
    </alternativeName>
    <alternativeName>
        <fullName>Cytochrome b-c1 complex subunit 3</fullName>
    </alternativeName>
    <alternativeName>
        <fullName>Ubiquinol-cytochrome-c reductase complex cytochrome b subunit</fullName>
    </alternativeName>
</protein>
<geneLocation type="mitochondrion"/>
<feature type="chain" id="PRO_0000061371" description="Cytochrome b">
    <location>
        <begin position="1"/>
        <end position="379"/>
    </location>
</feature>
<feature type="transmembrane region" description="Helical" evidence="2">
    <location>
        <begin position="33"/>
        <end position="53"/>
    </location>
</feature>
<feature type="transmembrane region" description="Helical" evidence="2">
    <location>
        <begin position="77"/>
        <end position="98"/>
    </location>
</feature>
<feature type="transmembrane region" description="Helical" evidence="2">
    <location>
        <begin position="113"/>
        <end position="133"/>
    </location>
</feature>
<feature type="transmembrane region" description="Helical" evidence="2">
    <location>
        <begin position="178"/>
        <end position="198"/>
    </location>
</feature>
<feature type="transmembrane region" description="Helical" evidence="2">
    <location>
        <begin position="226"/>
        <end position="246"/>
    </location>
</feature>
<feature type="transmembrane region" description="Helical" evidence="2">
    <location>
        <begin position="288"/>
        <end position="308"/>
    </location>
</feature>
<feature type="transmembrane region" description="Helical" evidence="2">
    <location>
        <begin position="320"/>
        <end position="340"/>
    </location>
</feature>
<feature type="transmembrane region" description="Helical" evidence="2">
    <location>
        <begin position="347"/>
        <end position="367"/>
    </location>
</feature>
<feature type="binding site" description="axial binding residue" evidence="2">
    <location>
        <position position="83"/>
    </location>
    <ligand>
        <name>heme b</name>
        <dbReference type="ChEBI" id="CHEBI:60344"/>
        <label>b562</label>
    </ligand>
    <ligandPart>
        <name>Fe</name>
        <dbReference type="ChEBI" id="CHEBI:18248"/>
    </ligandPart>
</feature>
<feature type="binding site" description="axial binding residue" evidence="2">
    <location>
        <position position="97"/>
    </location>
    <ligand>
        <name>heme b</name>
        <dbReference type="ChEBI" id="CHEBI:60344"/>
        <label>b566</label>
    </ligand>
    <ligandPart>
        <name>Fe</name>
        <dbReference type="ChEBI" id="CHEBI:18248"/>
    </ligandPart>
</feature>
<feature type="binding site" description="axial binding residue" evidence="2">
    <location>
        <position position="182"/>
    </location>
    <ligand>
        <name>heme b</name>
        <dbReference type="ChEBI" id="CHEBI:60344"/>
        <label>b562</label>
    </ligand>
    <ligandPart>
        <name>Fe</name>
        <dbReference type="ChEBI" id="CHEBI:18248"/>
    </ligandPart>
</feature>
<feature type="binding site" description="axial binding residue" evidence="2">
    <location>
        <position position="196"/>
    </location>
    <ligand>
        <name>heme b</name>
        <dbReference type="ChEBI" id="CHEBI:60344"/>
        <label>b566</label>
    </ligand>
    <ligandPart>
        <name>Fe</name>
        <dbReference type="ChEBI" id="CHEBI:18248"/>
    </ligandPart>
</feature>
<feature type="binding site" evidence="2">
    <location>
        <position position="201"/>
    </location>
    <ligand>
        <name>a ubiquinone</name>
        <dbReference type="ChEBI" id="CHEBI:16389"/>
    </ligand>
</feature>
<gene>
    <name type="primary">MT-CYB</name>
    <name type="synonym">COB</name>
    <name type="synonym">CYTB</name>
    <name type="synonym">MTCYB</name>
</gene>
<dbReference type="EMBL" id="AB058604">
    <property type="protein sequence ID" value="BAB40220.1"/>
    <property type="molecule type" value="Genomic_DNA"/>
</dbReference>
<dbReference type="EMBL" id="AB058605">
    <property type="protein sequence ID" value="BAB40221.1"/>
    <property type="molecule type" value="Genomic_DNA"/>
</dbReference>
<dbReference type="EMBL" id="AB058606">
    <property type="protein sequence ID" value="BAB40222.1"/>
    <property type="molecule type" value="Genomic_DNA"/>
</dbReference>
<dbReference type="SMR" id="Q9B1X4"/>
<dbReference type="GO" id="GO:0005743">
    <property type="term" value="C:mitochondrial inner membrane"/>
    <property type="evidence" value="ECO:0007669"/>
    <property type="project" value="UniProtKB-SubCell"/>
</dbReference>
<dbReference type="GO" id="GO:0045275">
    <property type="term" value="C:respiratory chain complex III"/>
    <property type="evidence" value="ECO:0007669"/>
    <property type="project" value="InterPro"/>
</dbReference>
<dbReference type="GO" id="GO:0046872">
    <property type="term" value="F:metal ion binding"/>
    <property type="evidence" value="ECO:0007669"/>
    <property type="project" value="UniProtKB-KW"/>
</dbReference>
<dbReference type="GO" id="GO:0008121">
    <property type="term" value="F:ubiquinol-cytochrome-c reductase activity"/>
    <property type="evidence" value="ECO:0007669"/>
    <property type="project" value="InterPro"/>
</dbReference>
<dbReference type="GO" id="GO:0006122">
    <property type="term" value="P:mitochondrial electron transport, ubiquinol to cytochrome c"/>
    <property type="evidence" value="ECO:0007669"/>
    <property type="project" value="TreeGrafter"/>
</dbReference>
<dbReference type="CDD" id="cd00290">
    <property type="entry name" value="cytochrome_b_C"/>
    <property type="match status" value="1"/>
</dbReference>
<dbReference type="CDD" id="cd00284">
    <property type="entry name" value="Cytochrome_b_N"/>
    <property type="match status" value="1"/>
</dbReference>
<dbReference type="FunFam" id="1.20.810.10:FF:000002">
    <property type="entry name" value="Cytochrome b"/>
    <property type="match status" value="1"/>
</dbReference>
<dbReference type="Gene3D" id="1.20.810.10">
    <property type="entry name" value="Cytochrome Bc1 Complex, Chain C"/>
    <property type="match status" value="1"/>
</dbReference>
<dbReference type="InterPro" id="IPR005798">
    <property type="entry name" value="Cyt_b/b6_C"/>
</dbReference>
<dbReference type="InterPro" id="IPR036150">
    <property type="entry name" value="Cyt_b/b6_C_sf"/>
</dbReference>
<dbReference type="InterPro" id="IPR005797">
    <property type="entry name" value="Cyt_b/b6_N"/>
</dbReference>
<dbReference type="InterPro" id="IPR027387">
    <property type="entry name" value="Cytb/b6-like_sf"/>
</dbReference>
<dbReference type="InterPro" id="IPR030689">
    <property type="entry name" value="Cytochrome_b"/>
</dbReference>
<dbReference type="InterPro" id="IPR048260">
    <property type="entry name" value="Cytochrome_b_C_euk/bac"/>
</dbReference>
<dbReference type="InterPro" id="IPR048259">
    <property type="entry name" value="Cytochrome_b_N_euk/bac"/>
</dbReference>
<dbReference type="InterPro" id="IPR016174">
    <property type="entry name" value="Di-haem_cyt_TM"/>
</dbReference>
<dbReference type="PANTHER" id="PTHR19271">
    <property type="entry name" value="CYTOCHROME B"/>
    <property type="match status" value="1"/>
</dbReference>
<dbReference type="PANTHER" id="PTHR19271:SF16">
    <property type="entry name" value="CYTOCHROME B"/>
    <property type="match status" value="1"/>
</dbReference>
<dbReference type="Pfam" id="PF00032">
    <property type="entry name" value="Cytochrom_B_C"/>
    <property type="match status" value="1"/>
</dbReference>
<dbReference type="Pfam" id="PF00033">
    <property type="entry name" value="Cytochrome_B"/>
    <property type="match status" value="1"/>
</dbReference>
<dbReference type="PIRSF" id="PIRSF038885">
    <property type="entry name" value="COB"/>
    <property type="match status" value="1"/>
</dbReference>
<dbReference type="SUPFAM" id="SSF81648">
    <property type="entry name" value="a domain/subunit of cytochrome bc1 complex (Ubiquinol-cytochrome c reductase)"/>
    <property type="match status" value="1"/>
</dbReference>
<dbReference type="SUPFAM" id="SSF81342">
    <property type="entry name" value="Transmembrane di-heme cytochromes"/>
    <property type="match status" value="1"/>
</dbReference>
<dbReference type="PROSITE" id="PS51003">
    <property type="entry name" value="CYTB_CTER"/>
    <property type="match status" value="1"/>
</dbReference>
<dbReference type="PROSITE" id="PS51002">
    <property type="entry name" value="CYTB_NTER"/>
    <property type="match status" value="1"/>
</dbReference>
<comment type="function">
    <text evidence="2">Component of the ubiquinol-cytochrome c reductase complex (complex III or cytochrome b-c1 complex) that is part of the mitochondrial respiratory chain. The b-c1 complex mediates electron transfer from ubiquinol to cytochrome c. Contributes to the generation of a proton gradient across the mitochondrial membrane that is then used for ATP synthesis.</text>
</comment>
<comment type="cofactor">
    <cofactor evidence="2">
        <name>heme b</name>
        <dbReference type="ChEBI" id="CHEBI:60344"/>
    </cofactor>
    <text evidence="2">Binds 2 heme b groups non-covalently.</text>
</comment>
<comment type="subunit">
    <text evidence="2">The cytochrome bc1 complex contains 11 subunits: 3 respiratory subunits (MT-CYB, CYC1 and UQCRFS1), 2 core proteins (UQCRC1 and UQCRC2) and 6 low-molecular weight proteins (UQCRH/QCR6, UQCRB/QCR7, UQCRQ/QCR8, UQCR10/QCR9, UQCR11/QCR10 and a cleavage product of UQCRFS1). This cytochrome bc1 complex then forms a dimer.</text>
</comment>
<comment type="subcellular location">
    <subcellularLocation>
        <location evidence="2">Mitochondrion inner membrane</location>
        <topology evidence="2">Multi-pass membrane protein</topology>
    </subcellularLocation>
</comment>
<comment type="miscellaneous">
    <text evidence="1">Heme 1 (or BL or b562) is low-potential and absorbs at about 562 nm, and heme 2 (or BH or b566) is high-potential and absorbs at about 566 nm.</text>
</comment>
<comment type="similarity">
    <text evidence="3 4">Belongs to the cytochrome b family.</text>
</comment>
<comment type="caution">
    <text evidence="2">The full-length protein contains only eight transmembrane helices, not nine as predicted by bioinformatics tools.</text>
</comment>
<accession>Q9B1X4</accession>
<keyword id="KW-0249">Electron transport</keyword>
<keyword id="KW-0349">Heme</keyword>
<keyword id="KW-0408">Iron</keyword>
<keyword id="KW-0472">Membrane</keyword>
<keyword id="KW-0479">Metal-binding</keyword>
<keyword id="KW-0496">Mitochondrion</keyword>
<keyword id="KW-0999">Mitochondrion inner membrane</keyword>
<keyword id="KW-0679">Respiratory chain</keyword>
<keyword id="KW-0812">Transmembrane</keyword>
<keyword id="KW-1133">Transmembrane helix</keyword>
<keyword id="KW-0813">Transport</keyword>
<keyword id="KW-0830">Ubiquinone</keyword>
<proteinExistence type="inferred from homology"/>
<sequence length="379" mass="42762">MTNIRKTHPLLKIINHALIDLPAPSNISAWWNFGSLLGMCLLIQILTGLFLAMHYTSDTMTAFSSVTHICRDVNYGWLIRYLHANGASMFFICLYMHVGRGIYYGSYTYLETWNIGIILLFAVMATAFMGYVLPWGQMSFWGATVITNLLSAIPYIGTTLVEWIWGGFSVDKATLTRFFAFHFILPFIITALVMIHLLFLHETGSNNPSGIPSDSDKIPFHPYYTTKDALGFFILFLLLLLLVLFSPDLLGDPDNYTPANPLSTPPHIKPEWYFLFAYAILRSIPNKLGGVLALVMSILVLAIIPFLHTSKQRSMTFRPISQALFWILVADLLTLTWIGGQPVEHPFITIGQVASILYFSIILILMPLASLIENKILKW</sequence>
<reference key="1">
    <citation type="journal article" date="2002" name="Genes Genet. Syst.">
        <title>Molecular phylogeny of Japanese Leporidae, the Amami rabbit Pentalagus furnessi, the Japanese hare Lepus brachyurus, and the mountain hare Lepus timidus, inferred from mitochondrial DNA sequences.</title>
        <authorList>
            <person name="Yamada F."/>
            <person name="Takaki M."/>
            <person name="Suzuki H."/>
        </authorList>
    </citation>
    <scope>NUCLEOTIDE SEQUENCE [GENOMIC DNA]</scope>
</reference>
<organism>
    <name type="scientific">Pentalagus furnessi</name>
    <name type="common">Amami rabbit</name>
    <dbReference type="NCBI Taxonomy" id="156447"/>
    <lineage>
        <taxon>Eukaryota</taxon>
        <taxon>Metazoa</taxon>
        <taxon>Chordata</taxon>
        <taxon>Craniata</taxon>
        <taxon>Vertebrata</taxon>
        <taxon>Euteleostomi</taxon>
        <taxon>Mammalia</taxon>
        <taxon>Eutheria</taxon>
        <taxon>Euarchontoglires</taxon>
        <taxon>Glires</taxon>
        <taxon>Lagomorpha</taxon>
        <taxon>Leporidae</taxon>
        <taxon>Pentalagus</taxon>
    </lineage>
</organism>